<comment type="function">
    <text evidence="1">Converts heme B (protoheme IX) to heme O by substitution of the vinyl group on carbon 2 of heme B porphyrin ring with a hydroxyethyl farnesyl side group.</text>
</comment>
<comment type="catalytic activity">
    <reaction evidence="1">
        <text>heme b + (2E,6E)-farnesyl diphosphate + H2O = Fe(II)-heme o + diphosphate</text>
        <dbReference type="Rhea" id="RHEA:28070"/>
        <dbReference type="ChEBI" id="CHEBI:15377"/>
        <dbReference type="ChEBI" id="CHEBI:33019"/>
        <dbReference type="ChEBI" id="CHEBI:60344"/>
        <dbReference type="ChEBI" id="CHEBI:60530"/>
        <dbReference type="ChEBI" id="CHEBI:175763"/>
        <dbReference type="EC" id="2.5.1.141"/>
    </reaction>
</comment>
<comment type="pathway">
    <text evidence="1">Porphyrin-containing compound metabolism; heme O biosynthesis; heme O from protoheme: step 1/1.</text>
</comment>
<comment type="subunit">
    <text evidence="1">Interacts with CtaA.</text>
</comment>
<comment type="subcellular location">
    <subcellularLocation>
        <location evidence="1">Cell membrane</location>
        <topology evidence="1">Multi-pass membrane protein</topology>
    </subcellularLocation>
</comment>
<comment type="miscellaneous">
    <text evidence="1">Carbon 2 of the heme B porphyrin ring is defined according to the Fischer nomenclature.</text>
</comment>
<comment type="similarity">
    <text evidence="1">Belongs to the UbiA prenyltransferase family. Protoheme IX farnesyltransferase subfamily.</text>
</comment>
<reference key="1">
    <citation type="journal article" date="2007" name="PLoS ONE">
        <title>Molecular correlates of host specialization in Staphylococcus aureus.</title>
        <authorList>
            <person name="Herron-Olson L."/>
            <person name="Fitzgerald J.R."/>
            <person name="Musser J.M."/>
            <person name="Kapur V."/>
        </authorList>
    </citation>
    <scope>NUCLEOTIDE SEQUENCE [LARGE SCALE GENOMIC DNA]</scope>
    <source>
        <strain>bovine RF122 / ET3-1</strain>
    </source>
</reference>
<dbReference type="EC" id="2.5.1.141" evidence="1"/>
<dbReference type="EMBL" id="AJ938182">
    <property type="protein sequence ID" value="CAI80669.1"/>
    <property type="molecule type" value="Genomic_DNA"/>
</dbReference>
<dbReference type="SMR" id="Q2YX83"/>
<dbReference type="KEGG" id="sab:SAB0981"/>
<dbReference type="HOGENOM" id="CLU_029631_0_0_9"/>
<dbReference type="UniPathway" id="UPA00834">
    <property type="reaction ID" value="UER00712"/>
</dbReference>
<dbReference type="GO" id="GO:0005886">
    <property type="term" value="C:plasma membrane"/>
    <property type="evidence" value="ECO:0007669"/>
    <property type="project" value="UniProtKB-SubCell"/>
</dbReference>
<dbReference type="GO" id="GO:0008495">
    <property type="term" value="F:protoheme IX farnesyltransferase activity"/>
    <property type="evidence" value="ECO:0007669"/>
    <property type="project" value="UniProtKB-UniRule"/>
</dbReference>
<dbReference type="GO" id="GO:0048034">
    <property type="term" value="P:heme O biosynthetic process"/>
    <property type="evidence" value="ECO:0007669"/>
    <property type="project" value="UniProtKB-UniRule"/>
</dbReference>
<dbReference type="CDD" id="cd13957">
    <property type="entry name" value="PT_UbiA_Cox10"/>
    <property type="match status" value="1"/>
</dbReference>
<dbReference type="Gene3D" id="1.10.357.140">
    <property type="entry name" value="UbiA prenyltransferase"/>
    <property type="match status" value="1"/>
</dbReference>
<dbReference type="HAMAP" id="MF_00154">
    <property type="entry name" value="CyoE_CtaB"/>
    <property type="match status" value="1"/>
</dbReference>
<dbReference type="InterPro" id="IPR006369">
    <property type="entry name" value="Protohaem_IX_farnesylTrfase"/>
</dbReference>
<dbReference type="InterPro" id="IPR000537">
    <property type="entry name" value="UbiA_prenyltransferase"/>
</dbReference>
<dbReference type="InterPro" id="IPR044878">
    <property type="entry name" value="UbiA_sf"/>
</dbReference>
<dbReference type="NCBIfam" id="TIGR01473">
    <property type="entry name" value="cyoE_ctaB"/>
    <property type="match status" value="1"/>
</dbReference>
<dbReference type="PANTHER" id="PTHR43448">
    <property type="entry name" value="PROTOHEME IX FARNESYLTRANSFERASE, MITOCHONDRIAL"/>
    <property type="match status" value="1"/>
</dbReference>
<dbReference type="PANTHER" id="PTHR43448:SF2">
    <property type="entry name" value="PROTOHEME IX FARNESYLTRANSFERASE, MITOCHONDRIAL"/>
    <property type="match status" value="1"/>
</dbReference>
<dbReference type="Pfam" id="PF01040">
    <property type="entry name" value="UbiA"/>
    <property type="match status" value="1"/>
</dbReference>
<name>COXX_STAAB</name>
<accession>Q2YX83</accession>
<keyword id="KW-1003">Cell membrane</keyword>
<keyword id="KW-0350">Heme biosynthesis</keyword>
<keyword id="KW-0472">Membrane</keyword>
<keyword id="KW-0808">Transferase</keyword>
<keyword id="KW-0812">Transmembrane</keyword>
<keyword id="KW-1133">Transmembrane helix</keyword>
<organism>
    <name type="scientific">Staphylococcus aureus (strain bovine RF122 / ET3-1)</name>
    <dbReference type="NCBI Taxonomy" id="273036"/>
    <lineage>
        <taxon>Bacteria</taxon>
        <taxon>Bacillati</taxon>
        <taxon>Bacillota</taxon>
        <taxon>Bacilli</taxon>
        <taxon>Bacillales</taxon>
        <taxon>Staphylococcaceae</taxon>
        <taxon>Staphylococcus</taxon>
    </lineage>
</organism>
<evidence type="ECO:0000255" key="1">
    <source>
        <dbReference type="HAMAP-Rule" id="MF_00154"/>
    </source>
</evidence>
<proteinExistence type="inferred from homology"/>
<gene>
    <name evidence="1" type="primary">ctaB</name>
    <name type="ordered locus">SAB0981</name>
</gene>
<protein>
    <recommendedName>
        <fullName evidence="1">Protoheme IX farnesyltransferase</fullName>
        <ecNumber evidence="1">2.5.1.141</ecNumber>
    </recommendedName>
    <alternativeName>
        <fullName evidence="1">Heme B farnesyltransferase</fullName>
    </alternativeName>
    <alternativeName>
        <fullName evidence="1">Heme O synthase</fullName>
    </alternativeName>
</protein>
<feature type="chain" id="PRO_0000327154" description="Protoheme IX farnesyltransferase">
    <location>
        <begin position="1"/>
        <end position="303"/>
    </location>
</feature>
<feature type="transmembrane region" description="Helical" evidence="1">
    <location>
        <begin position="25"/>
        <end position="45"/>
    </location>
</feature>
<feature type="transmembrane region" description="Helical" evidence="1">
    <location>
        <begin position="54"/>
        <end position="74"/>
    </location>
</feature>
<feature type="transmembrane region" description="Helical" evidence="1">
    <location>
        <begin position="104"/>
        <end position="124"/>
    </location>
</feature>
<feature type="transmembrane region" description="Helical" evidence="1">
    <location>
        <begin position="125"/>
        <end position="145"/>
    </location>
</feature>
<feature type="transmembrane region" description="Helical" evidence="1">
    <location>
        <begin position="151"/>
        <end position="171"/>
    </location>
</feature>
<feature type="transmembrane region" description="Helical" evidence="1">
    <location>
        <begin position="179"/>
        <end position="199"/>
    </location>
</feature>
<feature type="transmembrane region" description="Helical" evidence="1">
    <location>
        <begin position="227"/>
        <end position="247"/>
    </location>
</feature>
<feature type="transmembrane region" description="Helical" evidence="1">
    <location>
        <begin position="248"/>
        <end position="268"/>
    </location>
</feature>
<feature type="transmembrane region" description="Helical" evidence="1">
    <location>
        <begin position="280"/>
        <end position="300"/>
    </location>
</feature>
<sequence>MSKEHTLSQNISRVNFKELQQIIKMGLVQGNLIPAFAGAWLAVVMTNHSFLSSIPQILLMLLGSTLIMGGACALNNYYDQDIDRIMPSKQNRPTVNNRITDQNLLLLSFGMMLVGEICLFLLNIPSGVLGLMGIVGYVSYYSIWSKRHTTWNTVIGSFPGAVPPLIGWVAIEGQISLTAIALFLVVFCWQPIHFYALAIKRKDEYALANIPMLPSVKGFKRTRVSMFIWLIILLPVPLLLINLGVVFVVLATLLNLGWIALGLTTFKKNSDQTKWATQMFIYSLNYLVIFFVLAVIVSLLTLI</sequence>